<name>TXU29_MEGOP</name>
<dbReference type="EMBL" id="OP514847">
    <property type="protein sequence ID" value="WJJ70365.1"/>
    <property type="molecule type" value="mRNA"/>
</dbReference>
<dbReference type="GO" id="GO:0005576">
    <property type="term" value="C:extracellular region"/>
    <property type="evidence" value="ECO:0007669"/>
    <property type="project" value="UniProtKB-SubCell"/>
</dbReference>
<dbReference type="GO" id="GO:0090729">
    <property type="term" value="F:toxin activity"/>
    <property type="evidence" value="ECO:0007669"/>
    <property type="project" value="UniProtKB-KW"/>
</dbReference>
<comment type="function">
    <text evidence="4">Probable toxin.</text>
</comment>
<comment type="subcellular location">
    <subcellularLocation>
        <location evidence="2">Secreted</location>
    </subcellularLocation>
</comment>
<comment type="tissue specificity">
    <text evidence="2">Expressed by the venom apparatus.</text>
</comment>
<comment type="developmental stage">
    <text evidence="2">Larvae.</text>
</comment>
<comment type="PTM">
    <text evidence="5">Contains 2 disulfide bonds.</text>
</comment>
<comment type="mass spectrometry" mass="3328.55" method="MALDI" evidence="2">
    <text>Monoisotopic mass.</text>
</comment>
<comment type="similarity">
    <text evidence="4">Belongs to the caterpillar 2 family.</text>
</comment>
<protein>
    <recommendedName>
        <fullName evidence="3">U-megalopygitoxin(2)-Mo9</fullName>
        <shortName evidence="3">U-MPTX(2)-Mo9</shortName>
        <shortName evidence="6">U-MPTX.2-9</shortName>
    </recommendedName>
</protein>
<keyword id="KW-0027">Amidation</keyword>
<keyword id="KW-1015">Disulfide bond</keyword>
<keyword id="KW-0873">Pyrrolidone carboxylic acid</keyword>
<keyword id="KW-0964">Secreted</keyword>
<keyword id="KW-0732">Signal</keyword>
<keyword id="KW-0800">Toxin</keyword>
<reference key="1">
    <citation type="journal article" date="2023" name="Proc. Natl. Acad. Sci. U.S.A.">
        <title>Horizontal gene transfer underlies the painful stings of asp caterpillars (Lepidoptera: Megalopygidae).</title>
        <authorList>
            <person name="Walker A.A."/>
            <person name="Robinson S.D."/>
            <person name="Merritt D.J."/>
            <person name="Cardoso F.C."/>
            <person name="Goudarzi M.H."/>
            <person name="Mercedes R.S."/>
            <person name="Eagles D.A."/>
            <person name="Cooper P."/>
            <person name="Zdenek C.N."/>
            <person name="Fry B.G."/>
            <person name="Hall D.W."/>
            <person name="Vetter I."/>
            <person name="King G.F."/>
        </authorList>
    </citation>
    <scope>NUCLEOTIDE SEQUENCE [MRNA]</scope>
    <scope>MASS SPECTROMETRY</scope>
    <scope>SYNTHESIS OF 26-55</scope>
    <scope>PYROGLUTAMATE FORMATION AT GLN-26</scope>
    <scope>AMIDATION AT THR-55</scope>
    <scope>SUBCELLULAR LOCATION</scope>
    <scope>TISSUE SPECIFICITY</scope>
    <scope>DEVELOPMENTAL STAGE</scope>
    <source>
        <tissue>Venom</tissue>
    </source>
</reference>
<organism>
    <name type="scientific">Megalopyge opercularis</name>
    <name type="common">Southern flannel moth</name>
    <name type="synonym">Phalaena opercularis</name>
    <dbReference type="NCBI Taxonomy" id="1113279"/>
    <lineage>
        <taxon>Eukaryota</taxon>
        <taxon>Metazoa</taxon>
        <taxon>Ecdysozoa</taxon>
        <taxon>Arthropoda</taxon>
        <taxon>Hexapoda</taxon>
        <taxon>Insecta</taxon>
        <taxon>Pterygota</taxon>
        <taxon>Neoptera</taxon>
        <taxon>Endopterygota</taxon>
        <taxon>Lepidoptera</taxon>
        <taxon>Glossata</taxon>
        <taxon>Ditrysia</taxon>
        <taxon>Zygaenoidea</taxon>
        <taxon>Megalopygidae</taxon>
        <taxon>Megalopyge</taxon>
    </lineage>
</organism>
<evidence type="ECO:0000255" key="1"/>
<evidence type="ECO:0000269" key="2">
    <source>
    </source>
</evidence>
<evidence type="ECO:0000303" key="3">
    <source>
    </source>
</evidence>
<evidence type="ECO:0000305" key="4"/>
<evidence type="ECO:0000305" key="5">
    <source>
    </source>
</evidence>
<evidence type="ECO:0000312" key="6">
    <source>
        <dbReference type="EMBL" id="WJJ70365.1"/>
    </source>
</evidence>
<feature type="signal peptide" evidence="1">
    <location>
        <begin position="1"/>
        <end position="25"/>
    </location>
</feature>
<feature type="peptide" id="PRO_0000461525" description="U-megalopygitoxin(2)-Mo9" evidence="5">
    <location>
        <begin position="26"/>
        <end position="55"/>
    </location>
</feature>
<feature type="modified residue" description="Pyrrolidone carboxylic acid" evidence="2">
    <location>
        <position position="26"/>
    </location>
</feature>
<feature type="modified residue" description="Threonine amide" evidence="2">
    <location>
        <position position="55"/>
    </location>
</feature>
<sequence length="56" mass="6147">MKFIVLLLIVTSVLMMFAVTTEASPQVNHKIERAKCGQKGKCYDGVNVQCIDCNTG</sequence>
<accession>P0DXW7</accession>
<proteinExistence type="evidence at protein level"/>